<name>KGUA_STRP1</name>
<comment type="function">
    <text evidence="1">Essential for recycling GMP and indirectly, cGMP.</text>
</comment>
<comment type="catalytic activity">
    <reaction evidence="1">
        <text>GMP + ATP = GDP + ADP</text>
        <dbReference type="Rhea" id="RHEA:20780"/>
        <dbReference type="ChEBI" id="CHEBI:30616"/>
        <dbReference type="ChEBI" id="CHEBI:58115"/>
        <dbReference type="ChEBI" id="CHEBI:58189"/>
        <dbReference type="ChEBI" id="CHEBI:456216"/>
        <dbReference type="EC" id="2.7.4.8"/>
    </reaction>
</comment>
<comment type="subcellular location">
    <subcellularLocation>
        <location evidence="1">Cytoplasm</location>
    </subcellularLocation>
</comment>
<comment type="similarity">
    <text evidence="1">Belongs to the guanylate kinase family.</text>
</comment>
<gene>
    <name evidence="1" type="primary">gmk</name>
    <name type="ordered locus">SPy_1632</name>
    <name type="ordered locus">M5005_Spy1341</name>
</gene>
<organism>
    <name type="scientific">Streptococcus pyogenes serotype M1</name>
    <dbReference type="NCBI Taxonomy" id="301447"/>
    <lineage>
        <taxon>Bacteria</taxon>
        <taxon>Bacillati</taxon>
        <taxon>Bacillota</taxon>
        <taxon>Bacilli</taxon>
        <taxon>Lactobacillales</taxon>
        <taxon>Streptococcaceae</taxon>
        <taxon>Streptococcus</taxon>
    </lineage>
</organism>
<keyword id="KW-0067">ATP-binding</keyword>
<keyword id="KW-0963">Cytoplasm</keyword>
<keyword id="KW-0418">Kinase</keyword>
<keyword id="KW-0547">Nucleotide-binding</keyword>
<keyword id="KW-1185">Reference proteome</keyword>
<keyword id="KW-0808">Transferase</keyword>
<reference key="1">
    <citation type="journal article" date="2001" name="Proc. Natl. Acad. Sci. U.S.A.">
        <title>Complete genome sequence of an M1 strain of Streptococcus pyogenes.</title>
        <authorList>
            <person name="Ferretti J.J."/>
            <person name="McShan W.M."/>
            <person name="Ajdic D.J."/>
            <person name="Savic D.J."/>
            <person name="Savic G."/>
            <person name="Lyon K."/>
            <person name="Primeaux C."/>
            <person name="Sezate S."/>
            <person name="Suvorov A.N."/>
            <person name="Kenton S."/>
            <person name="Lai H.S."/>
            <person name="Lin S.P."/>
            <person name="Qian Y."/>
            <person name="Jia H.G."/>
            <person name="Najar F.Z."/>
            <person name="Ren Q."/>
            <person name="Zhu H."/>
            <person name="Song L."/>
            <person name="White J."/>
            <person name="Yuan X."/>
            <person name="Clifton S.W."/>
            <person name="Roe B.A."/>
            <person name="McLaughlin R.E."/>
        </authorList>
    </citation>
    <scope>NUCLEOTIDE SEQUENCE [LARGE SCALE GENOMIC DNA]</scope>
    <source>
        <strain>ATCC 700294 / SF370 / Serotype M1</strain>
    </source>
</reference>
<reference key="2">
    <citation type="journal article" date="2005" name="J. Infect. Dis.">
        <title>Evolutionary origin and emergence of a highly successful clone of serotype M1 group A Streptococcus involved multiple horizontal gene transfer events.</title>
        <authorList>
            <person name="Sumby P."/>
            <person name="Porcella S.F."/>
            <person name="Madrigal A.G."/>
            <person name="Barbian K.D."/>
            <person name="Virtaneva K."/>
            <person name="Ricklefs S.M."/>
            <person name="Sturdevant D.E."/>
            <person name="Graham M.R."/>
            <person name="Vuopio-Varkila J."/>
            <person name="Hoe N.P."/>
            <person name="Musser J.M."/>
        </authorList>
    </citation>
    <scope>NUCLEOTIDE SEQUENCE [LARGE SCALE GENOMIC DNA]</scope>
    <source>
        <strain>ATCC BAA-947 / MGAS5005 / Serotype M1</strain>
    </source>
</reference>
<feature type="chain" id="PRO_0000170620" description="Guanylate kinase">
    <location>
        <begin position="1"/>
        <end position="211"/>
    </location>
</feature>
<feature type="domain" description="Guanylate kinase-like" evidence="1">
    <location>
        <begin position="5"/>
        <end position="184"/>
    </location>
</feature>
<feature type="binding site" evidence="1">
    <location>
        <begin position="12"/>
        <end position="19"/>
    </location>
    <ligand>
        <name>ATP</name>
        <dbReference type="ChEBI" id="CHEBI:30616"/>
    </ligand>
</feature>
<proteinExistence type="inferred from homology"/>
<sequence>MSERGLLIVFSGPSGVGKGTVRQEIFSTPDHKFEYSVSMTTRPQRPGEVDGVDYFFRTREEFEELIKTGQMLEYAEYVGNYYGTPLTYVNETLDKGIDVFLEIEVQGALQVKSKVPDGVFVFLTPPDLDELEDRLVGRGTDSQEVIAQRIERAKEEIALMREYDYAVVNDEVALAAERVKRIIETEHFRVERVIGRYDKMIKITKNSFKAK</sequence>
<dbReference type="EC" id="2.7.4.8" evidence="1"/>
<dbReference type="EMBL" id="AE004092">
    <property type="protein sequence ID" value="AAK34402.1"/>
    <property type="molecule type" value="Genomic_DNA"/>
</dbReference>
<dbReference type="EMBL" id="CP000017">
    <property type="protein sequence ID" value="AAZ51959.1"/>
    <property type="molecule type" value="Genomic_DNA"/>
</dbReference>
<dbReference type="RefSeq" id="NP_269681.1">
    <property type="nucleotide sequence ID" value="NC_002737.2"/>
</dbReference>
<dbReference type="SMR" id="Q99YM5"/>
<dbReference type="PaxDb" id="1314-HKU360_01389"/>
<dbReference type="KEGG" id="spy:SPy_1632"/>
<dbReference type="KEGG" id="spz:M5005_Spy1341"/>
<dbReference type="PATRIC" id="fig|160490.10.peg.1423"/>
<dbReference type="HOGENOM" id="CLU_001715_1_2_9"/>
<dbReference type="OMA" id="EWAVVHG"/>
<dbReference type="Proteomes" id="UP000000750">
    <property type="component" value="Chromosome"/>
</dbReference>
<dbReference type="GO" id="GO:0005829">
    <property type="term" value="C:cytosol"/>
    <property type="evidence" value="ECO:0007669"/>
    <property type="project" value="TreeGrafter"/>
</dbReference>
<dbReference type="GO" id="GO:0005524">
    <property type="term" value="F:ATP binding"/>
    <property type="evidence" value="ECO:0007669"/>
    <property type="project" value="UniProtKB-UniRule"/>
</dbReference>
<dbReference type="GO" id="GO:0004385">
    <property type="term" value="F:guanylate kinase activity"/>
    <property type="evidence" value="ECO:0007669"/>
    <property type="project" value="UniProtKB-UniRule"/>
</dbReference>
<dbReference type="CDD" id="cd00071">
    <property type="entry name" value="GMPK"/>
    <property type="match status" value="1"/>
</dbReference>
<dbReference type="FunFam" id="3.40.50.300:FF:000855">
    <property type="entry name" value="Guanylate kinase"/>
    <property type="match status" value="1"/>
</dbReference>
<dbReference type="FunFam" id="3.30.63.10:FF:000002">
    <property type="entry name" value="Guanylate kinase 1"/>
    <property type="match status" value="1"/>
</dbReference>
<dbReference type="Gene3D" id="3.30.63.10">
    <property type="entry name" value="Guanylate Kinase phosphate binding domain"/>
    <property type="match status" value="1"/>
</dbReference>
<dbReference type="Gene3D" id="3.40.50.300">
    <property type="entry name" value="P-loop containing nucleotide triphosphate hydrolases"/>
    <property type="match status" value="2"/>
</dbReference>
<dbReference type="HAMAP" id="MF_00328">
    <property type="entry name" value="Guanylate_kinase"/>
    <property type="match status" value="1"/>
</dbReference>
<dbReference type="InterPro" id="IPR008145">
    <property type="entry name" value="GK/Ca_channel_bsu"/>
</dbReference>
<dbReference type="InterPro" id="IPR008144">
    <property type="entry name" value="Guanylate_kin-like_dom"/>
</dbReference>
<dbReference type="InterPro" id="IPR017665">
    <property type="entry name" value="Guanylate_kinase"/>
</dbReference>
<dbReference type="InterPro" id="IPR020590">
    <property type="entry name" value="Guanylate_kinase_CS"/>
</dbReference>
<dbReference type="InterPro" id="IPR027417">
    <property type="entry name" value="P-loop_NTPase"/>
</dbReference>
<dbReference type="NCBIfam" id="TIGR03263">
    <property type="entry name" value="guanyl_kin"/>
    <property type="match status" value="1"/>
</dbReference>
<dbReference type="PANTHER" id="PTHR23117:SF13">
    <property type="entry name" value="GUANYLATE KINASE"/>
    <property type="match status" value="1"/>
</dbReference>
<dbReference type="PANTHER" id="PTHR23117">
    <property type="entry name" value="GUANYLATE KINASE-RELATED"/>
    <property type="match status" value="1"/>
</dbReference>
<dbReference type="Pfam" id="PF00625">
    <property type="entry name" value="Guanylate_kin"/>
    <property type="match status" value="1"/>
</dbReference>
<dbReference type="SMART" id="SM00072">
    <property type="entry name" value="GuKc"/>
    <property type="match status" value="1"/>
</dbReference>
<dbReference type="SUPFAM" id="SSF52540">
    <property type="entry name" value="P-loop containing nucleoside triphosphate hydrolases"/>
    <property type="match status" value="1"/>
</dbReference>
<dbReference type="PROSITE" id="PS00856">
    <property type="entry name" value="GUANYLATE_KINASE_1"/>
    <property type="match status" value="1"/>
</dbReference>
<dbReference type="PROSITE" id="PS50052">
    <property type="entry name" value="GUANYLATE_KINASE_2"/>
    <property type="match status" value="1"/>
</dbReference>
<protein>
    <recommendedName>
        <fullName evidence="1">Guanylate kinase</fullName>
        <ecNumber evidence="1">2.7.4.8</ecNumber>
    </recommendedName>
    <alternativeName>
        <fullName evidence="1">GMP kinase</fullName>
    </alternativeName>
</protein>
<accession>Q99YM5</accession>
<accession>Q48XG6</accession>
<evidence type="ECO:0000255" key="1">
    <source>
        <dbReference type="HAMAP-Rule" id="MF_00328"/>
    </source>
</evidence>